<sequence length="73" mass="7737">MARRCDICGKGPLVGNNVSHANNKSKTRSLPNLRSVRATVDGTVKHVRVCTRCLKAGKVVKVAHGASRASARA</sequence>
<comment type="similarity">
    <text evidence="1">Belongs to the bacterial ribosomal protein bL28 family.</text>
</comment>
<reference key="1">
    <citation type="journal article" date="2015" name="Genome Announc.">
        <title>Complete genome sequence of Anaeromyxobacter sp. Fw109-5, an anaerobic, metal-reducing bacterium isolated from a contaminated subsurface environment.</title>
        <authorList>
            <person name="Hwang C."/>
            <person name="Copeland A."/>
            <person name="Lucas S."/>
            <person name="Lapidus A."/>
            <person name="Barry K."/>
            <person name="Glavina Del Rio T."/>
            <person name="Dalin E."/>
            <person name="Tice H."/>
            <person name="Pitluck S."/>
            <person name="Sims D."/>
            <person name="Brettin T."/>
            <person name="Bruce D.C."/>
            <person name="Detter J.C."/>
            <person name="Han C.S."/>
            <person name="Schmutz J."/>
            <person name="Larimer F.W."/>
            <person name="Land M.L."/>
            <person name="Hauser L.J."/>
            <person name="Kyrpides N."/>
            <person name="Lykidis A."/>
            <person name="Richardson P."/>
            <person name="Belieav A."/>
            <person name="Sanford R.A."/>
            <person name="Loeffler F.E."/>
            <person name="Fields M.W."/>
        </authorList>
    </citation>
    <scope>NUCLEOTIDE SEQUENCE [LARGE SCALE GENOMIC DNA]</scope>
    <source>
        <strain>Fw109-5</strain>
    </source>
</reference>
<organism>
    <name type="scientific">Anaeromyxobacter sp. (strain Fw109-5)</name>
    <dbReference type="NCBI Taxonomy" id="404589"/>
    <lineage>
        <taxon>Bacteria</taxon>
        <taxon>Pseudomonadati</taxon>
        <taxon>Myxococcota</taxon>
        <taxon>Myxococcia</taxon>
        <taxon>Myxococcales</taxon>
        <taxon>Cystobacterineae</taxon>
        <taxon>Anaeromyxobacteraceae</taxon>
        <taxon>Anaeromyxobacter</taxon>
    </lineage>
</organism>
<gene>
    <name evidence="1" type="primary">rpmB</name>
    <name type="ordered locus">Anae109_2515</name>
</gene>
<protein>
    <recommendedName>
        <fullName evidence="1">Large ribosomal subunit protein bL28</fullName>
    </recommendedName>
    <alternativeName>
        <fullName evidence="2">50S ribosomal protein L28</fullName>
    </alternativeName>
</protein>
<proteinExistence type="inferred from homology"/>
<name>RL28_ANADF</name>
<dbReference type="EMBL" id="CP000769">
    <property type="protein sequence ID" value="ABS26716.1"/>
    <property type="molecule type" value="Genomic_DNA"/>
</dbReference>
<dbReference type="RefSeq" id="WP_012097308.1">
    <property type="nucleotide sequence ID" value="NC_009675.1"/>
</dbReference>
<dbReference type="SMR" id="A7HDC0"/>
<dbReference type="STRING" id="404589.Anae109_2515"/>
<dbReference type="KEGG" id="afw:Anae109_2515"/>
<dbReference type="eggNOG" id="COG0227">
    <property type="taxonomic scope" value="Bacteria"/>
</dbReference>
<dbReference type="HOGENOM" id="CLU_064548_7_0_7"/>
<dbReference type="OrthoDB" id="9805609at2"/>
<dbReference type="Proteomes" id="UP000006382">
    <property type="component" value="Chromosome"/>
</dbReference>
<dbReference type="GO" id="GO:1990904">
    <property type="term" value="C:ribonucleoprotein complex"/>
    <property type="evidence" value="ECO:0007669"/>
    <property type="project" value="UniProtKB-KW"/>
</dbReference>
<dbReference type="GO" id="GO:0005840">
    <property type="term" value="C:ribosome"/>
    <property type="evidence" value="ECO:0007669"/>
    <property type="project" value="UniProtKB-KW"/>
</dbReference>
<dbReference type="GO" id="GO:0003735">
    <property type="term" value="F:structural constituent of ribosome"/>
    <property type="evidence" value="ECO:0007669"/>
    <property type="project" value="InterPro"/>
</dbReference>
<dbReference type="GO" id="GO:0006412">
    <property type="term" value="P:translation"/>
    <property type="evidence" value="ECO:0007669"/>
    <property type="project" value="UniProtKB-UniRule"/>
</dbReference>
<dbReference type="Gene3D" id="2.30.170.40">
    <property type="entry name" value="Ribosomal protein L28/L24"/>
    <property type="match status" value="1"/>
</dbReference>
<dbReference type="HAMAP" id="MF_00373">
    <property type="entry name" value="Ribosomal_bL28"/>
    <property type="match status" value="1"/>
</dbReference>
<dbReference type="InterPro" id="IPR050096">
    <property type="entry name" value="Bacterial_rp_bL28"/>
</dbReference>
<dbReference type="InterPro" id="IPR026569">
    <property type="entry name" value="Ribosomal_bL28"/>
</dbReference>
<dbReference type="InterPro" id="IPR034704">
    <property type="entry name" value="Ribosomal_bL28/bL31-like_sf"/>
</dbReference>
<dbReference type="InterPro" id="IPR001383">
    <property type="entry name" value="Ribosomal_bL28_bact-type"/>
</dbReference>
<dbReference type="InterPro" id="IPR037147">
    <property type="entry name" value="Ribosomal_bL28_sf"/>
</dbReference>
<dbReference type="NCBIfam" id="TIGR00009">
    <property type="entry name" value="L28"/>
    <property type="match status" value="1"/>
</dbReference>
<dbReference type="PANTHER" id="PTHR39080">
    <property type="entry name" value="50S RIBOSOMAL PROTEIN L28"/>
    <property type="match status" value="1"/>
</dbReference>
<dbReference type="PANTHER" id="PTHR39080:SF1">
    <property type="entry name" value="LARGE RIBOSOMAL SUBUNIT PROTEIN BL28A"/>
    <property type="match status" value="1"/>
</dbReference>
<dbReference type="Pfam" id="PF00830">
    <property type="entry name" value="Ribosomal_L28"/>
    <property type="match status" value="1"/>
</dbReference>
<dbReference type="SUPFAM" id="SSF143800">
    <property type="entry name" value="L28p-like"/>
    <property type="match status" value="1"/>
</dbReference>
<accession>A7HDC0</accession>
<keyword id="KW-1185">Reference proteome</keyword>
<keyword id="KW-0687">Ribonucleoprotein</keyword>
<keyword id="KW-0689">Ribosomal protein</keyword>
<evidence type="ECO:0000255" key="1">
    <source>
        <dbReference type="HAMAP-Rule" id="MF_00373"/>
    </source>
</evidence>
<evidence type="ECO:0000305" key="2"/>
<feature type="chain" id="PRO_1000007163" description="Large ribosomal subunit protein bL28">
    <location>
        <begin position="1"/>
        <end position="73"/>
    </location>
</feature>